<sequence length="130" mass="14193">MATTQNYGTGRRKTASARVFLRPGKGDIVVNGKPLDAYFGRETSRMVVRQPLEVAQAGNRFDVFATTAGGGANGQAGAIRLGIARALVEYDETLRGSMRAAGFMTRDAREVERKKVGLRKARRATQFSKR</sequence>
<comment type="similarity">
    <text evidence="1">Belongs to the universal ribosomal protein uS9 family.</text>
</comment>
<name>RS9_THISH</name>
<feature type="chain" id="PRO_1000146478" description="Small ribosomal subunit protein uS9">
    <location>
        <begin position="1"/>
        <end position="130"/>
    </location>
</feature>
<protein>
    <recommendedName>
        <fullName evidence="1">Small ribosomal subunit protein uS9</fullName>
    </recommendedName>
    <alternativeName>
        <fullName evidence="2">30S ribosomal protein S9</fullName>
    </alternativeName>
</protein>
<keyword id="KW-1185">Reference proteome</keyword>
<keyword id="KW-0687">Ribonucleoprotein</keyword>
<keyword id="KW-0689">Ribosomal protein</keyword>
<proteinExistence type="inferred from homology"/>
<organism>
    <name type="scientific">Thioalkalivibrio sulfidiphilus (strain HL-EbGR7)</name>
    <dbReference type="NCBI Taxonomy" id="396588"/>
    <lineage>
        <taxon>Bacteria</taxon>
        <taxon>Pseudomonadati</taxon>
        <taxon>Pseudomonadota</taxon>
        <taxon>Gammaproteobacteria</taxon>
        <taxon>Chromatiales</taxon>
        <taxon>Ectothiorhodospiraceae</taxon>
        <taxon>Thioalkalivibrio</taxon>
    </lineage>
</organism>
<accession>B8GNH0</accession>
<dbReference type="EMBL" id="CP001339">
    <property type="protein sequence ID" value="ACL73861.1"/>
    <property type="molecule type" value="Genomic_DNA"/>
</dbReference>
<dbReference type="RefSeq" id="WP_012639336.1">
    <property type="nucleotide sequence ID" value="NC_011901.1"/>
</dbReference>
<dbReference type="SMR" id="B8GNH0"/>
<dbReference type="STRING" id="396588.Tgr7_2788"/>
<dbReference type="KEGG" id="tgr:Tgr7_2788"/>
<dbReference type="eggNOG" id="COG0103">
    <property type="taxonomic scope" value="Bacteria"/>
</dbReference>
<dbReference type="HOGENOM" id="CLU_046483_2_1_6"/>
<dbReference type="OrthoDB" id="9803965at2"/>
<dbReference type="Proteomes" id="UP000002383">
    <property type="component" value="Chromosome"/>
</dbReference>
<dbReference type="GO" id="GO:0022627">
    <property type="term" value="C:cytosolic small ribosomal subunit"/>
    <property type="evidence" value="ECO:0007669"/>
    <property type="project" value="TreeGrafter"/>
</dbReference>
<dbReference type="GO" id="GO:0003723">
    <property type="term" value="F:RNA binding"/>
    <property type="evidence" value="ECO:0007669"/>
    <property type="project" value="TreeGrafter"/>
</dbReference>
<dbReference type="GO" id="GO:0003735">
    <property type="term" value="F:structural constituent of ribosome"/>
    <property type="evidence" value="ECO:0007669"/>
    <property type="project" value="InterPro"/>
</dbReference>
<dbReference type="GO" id="GO:0006412">
    <property type="term" value="P:translation"/>
    <property type="evidence" value="ECO:0007669"/>
    <property type="project" value="UniProtKB-UniRule"/>
</dbReference>
<dbReference type="FunFam" id="3.30.230.10:FF:000001">
    <property type="entry name" value="30S ribosomal protein S9"/>
    <property type="match status" value="1"/>
</dbReference>
<dbReference type="Gene3D" id="3.30.230.10">
    <property type="match status" value="1"/>
</dbReference>
<dbReference type="HAMAP" id="MF_00532_B">
    <property type="entry name" value="Ribosomal_uS9_B"/>
    <property type="match status" value="1"/>
</dbReference>
<dbReference type="InterPro" id="IPR020568">
    <property type="entry name" value="Ribosomal_Su5_D2-typ_SF"/>
</dbReference>
<dbReference type="InterPro" id="IPR000754">
    <property type="entry name" value="Ribosomal_uS9"/>
</dbReference>
<dbReference type="InterPro" id="IPR023035">
    <property type="entry name" value="Ribosomal_uS9_bac/plastid"/>
</dbReference>
<dbReference type="InterPro" id="IPR020574">
    <property type="entry name" value="Ribosomal_uS9_CS"/>
</dbReference>
<dbReference type="InterPro" id="IPR014721">
    <property type="entry name" value="Ribsml_uS5_D2-typ_fold_subgr"/>
</dbReference>
<dbReference type="NCBIfam" id="NF001099">
    <property type="entry name" value="PRK00132.1"/>
    <property type="match status" value="1"/>
</dbReference>
<dbReference type="PANTHER" id="PTHR21569">
    <property type="entry name" value="RIBOSOMAL PROTEIN S9"/>
    <property type="match status" value="1"/>
</dbReference>
<dbReference type="PANTHER" id="PTHR21569:SF1">
    <property type="entry name" value="SMALL RIBOSOMAL SUBUNIT PROTEIN US9M"/>
    <property type="match status" value="1"/>
</dbReference>
<dbReference type="Pfam" id="PF00380">
    <property type="entry name" value="Ribosomal_S9"/>
    <property type="match status" value="1"/>
</dbReference>
<dbReference type="SUPFAM" id="SSF54211">
    <property type="entry name" value="Ribosomal protein S5 domain 2-like"/>
    <property type="match status" value="1"/>
</dbReference>
<dbReference type="PROSITE" id="PS00360">
    <property type="entry name" value="RIBOSOMAL_S9"/>
    <property type="match status" value="1"/>
</dbReference>
<gene>
    <name evidence="1" type="primary">rpsI</name>
    <name type="ordered locus">Tgr7_2788</name>
</gene>
<evidence type="ECO:0000255" key="1">
    <source>
        <dbReference type="HAMAP-Rule" id="MF_00532"/>
    </source>
</evidence>
<evidence type="ECO:0000305" key="2"/>
<reference key="1">
    <citation type="journal article" date="2011" name="Stand. Genomic Sci.">
        <title>Complete genome sequence of 'Thioalkalivibrio sulfidophilus' HL-EbGr7.</title>
        <authorList>
            <person name="Muyzer G."/>
            <person name="Sorokin D.Y."/>
            <person name="Mavromatis K."/>
            <person name="Lapidus A."/>
            <person name="Clum A."/>
            <person name="Ivanova N."/>
            <person name="Pati A."/>
            <person name="d'Haeseleer P."/>
            <person name="Woyke T."/>
            <person name="Kyrpides N.C."/>
        </authorList>
    </citation>
    <scope>NUCLEOTIDE SEQUENCE [LARGE SCALE GENOMIC DNA]</scope>
    <source>
        <strain>HL-EbGR7</strain>
    </source>
</reference>